<reference key="1">
    <citation type="journal article" date="2008" name="Foodborne Pathog. Dis.">
        <title>The complete genome sequence and analysis of the human pathogen Campylobacter lari.</title>
        <authorList>
            <person name="Miller W.G."/>
            <person name="Wang G."/>
            <person name="Binnewies T.T."/>
            <person name="Parker C.T."/>
        </authorList>
    </citation>
    <scope>NUCLEOTIDE SEQUENCE [LARGE SCALE GENOMIC DNA]</scope>
    <source>
        <strain>RM2100 / D67 / ATCC BAA-1060</strain>
    </source>
</reference>
<accession>B9KFX8</accession>
<sequence>MVYGVIFGANSYEHEISIVSAVVLKKVLKAQKKFIFCDKNKEFFLIDEEKMNAKTFSSGAYKKEKALVLKQGGFFIKTMLGEKKLDMDVAVNIVHGKDGEDGKIAALLDFYGIKYIGPRIEASVLSFNKALTKLYAQSVGVKTLDYKVLNLHKEQNVSLSFPCILKPARLGSSIGISIVKDESELKYAKDVAFEFDEDVVVEQFVSNIKEYNLAGCMIGEKMEFSIIEEPRKNEILDFEQKYLGFSESSKVSEANISEELKQKLRDNFTRIYNPLFKGALIRCDFFVIDDEVYLNEINPNPGSLANYLFEDFTNIVDNLAKNIELEKQIKIDYAFIHSINGQKGKL</sequence>
<protein>
    <recommendedName>
        <fullName evidence="2">D-alanine--D-alanine ligase</fullName>
        <ecNumber evidence="2">6.3.2.4</ecNumber>
    </recommendedName>
    <alternativeName>
        <fullName evidence="2">D-Ala-D-Ala ligase</fullName>
    </alternativeName>
    <alternativeName>
        <fullName evidence="2">D-alanylalanine synthetase</fullName>
    </alternativeName>
</protein>
<gene>
    <name evidence="2" type="primary">ddl</name>
    <name type="ordered locus">Cla_0634</name>
</gene>
<comment type="function">
    <text evidence="2">Cell wall formation.</text>
</comment>
<comment type="catalytic activity">
    <reaction evidence="2">
        <text>2 D-alanine + ATP = D-alanyl-D-alanine + ADP + phosphate + H(+)</text>
        <dbReference type="Rhea" id="RHEA:11224"/>
        <dbReference type="ChEBI" id="CHEBI:15378"/>
        <dbReference type="ChEBI" id="CHEBI:30616"/>
        <dbReference type="ChEBI" id="CHEBI:43474"/>
        <dbReference type="ChEBI" id="CHEBI:57416"/>
        <dbReference type="ChEBI" id="CHEBI:57822"/>
        <dbReference type="ChEBI" id="CHEBI:456216"/>
        <dbReference type="EC" id="6.3.2.4"/>
    </reaction>
</comment>
<comment type="cofactor">
    <cofactor evidence="1">
        <name>Mg(2+)</name>
        <dbReference type="ChEBI" id="CHEBI:18420"/>
    </cofactor>
    <cofactor evidence="1">
        <name>Mn(2+)</name>
        <dbReference type="ChEBI" id="CHEBI:29035"/>
    </cofactor>
    <text evidence="1">Binds 2 magnesium or manganese ions per subunit.</text>
</comment>
<comment type="pathway">
    <text evidence="2">Cell wall biogenesis; peptidoglycan biosynthesis.</text>
</comment>
<comment type="subcellular location">
    <subcellularLocation>
        <location evidence="2">Cytoplasm</location>
    </subcellularLocation>
</comment>
<comment type="similarity">
    <text evidence="2">Belongs to the D-alanine--D-alanine ligase family.</text>
</comment>
<keyword id="KW-0067">ATP-binding</keyword>
<keyword id="KW-0133">Cell shape</keyword>
<keyword id="KW-0961">Cell wall biogenesis/degradation</keyword>
<keyword id="KW-0963">Cytoplasm</keyword>
<keyword id="KW-0436">Ligase</keyword>
<keyword id="KW-0460">Magnesium</keyword>
<keyword id="KW-0464">Manganese</keyword>
<keyword id="KW-0479">Metal-binding</keyword>
<keyword id="KW-0547">Nucleotide-binding</keyword>
<keyword id="KW-0573">Peptidoglycan synthesis</keyword>
<keyword id="KW-1185">Reference proteome</keyword>
<dbReference type="EC" id="6.3.2.4" evidence="2"/>
<dbReference type="EMBL" id="CP000932">
    <property type="protein sequence ID" value="ACM63963.1"/>
    <property type="molecule type" value="Genomic_DNA"/>
</dbReference>
<dbReference type="RefSeq" id="WP_012661346.1">
    <property type="nucleotide sequence ID" value="NC_012039.1"/>
</dbReference>
<dbReference type="SMR" id="B9KFX8"/>
<dbReference type="STRING" id="306263.Cla_0634"/>
<dbReference type="KEGG" id="cla:CLA_0634"/>
<dbReference type="PATRIC" id="fig|306263.5.peg.614"/>
<dbReference type="eggNOG" id="COG1181">
    <property type="taxonomic scope" value="Bacteria"/>
</dbReference>
<dbReference type="HOGENOM" id="CLU_039268_0_2_7"/>
<dbReference type="UniPathway" id="UPA00219"/>
<dbReference type="Proteomes" id="UP000007727">
    <property type="component" value="Chromosome"/>
</dbReference>
<dbReference type="GO" id="GO:0005737">
    <property type="term" value="C:cytoplasm"/>
    <property type="evidence" value="ECO:0007669"/>
    <property type="project" value="UniProtKB-SubCell"/>
</dbReference>
<dbReference type="GO" id="GO:0005524">
    <property type="term" value="F:ATP binding"/>
    <property type="evidence" value="ECO:0007669"/>
    <property type="project" value="UniProtKB-KW"/>
</dbReference>
<dbReference type="GO" id="GO:0008716">
    <property type="term" value="F:D-alanine-D-alanine ligase activity"/>
    <property type="evidence" value="ECO:0007669"/>
    <property type="project" value="UniProtKB-UniRule"/>
</dbReference>
<dbReference type="GO" id="GO:0046872">
    <property type="term" value="F:metal ion binding"/>
    <property type="evidence" value="ECO:0007669"/>
    <property type="project" value="UniProtKB-KW"/>
</dbReference>
<dbReference type="GO" id="GO:0071555">
    <property type="term" value="P:cell wall organization"/>
    <property type="evidence" value="ECO:0007669"/>
    <property type="project" value="UniProtKB-KW"/>
</dbReference>
<dbReference type="GO" id="GO:0009252">
    <property type="term" value="P:peptidoglycan biosynthetic process"/>
    <property type="evidence" value="ECO:0007669"/>
    <property type="project" value="UniProtKB-UniRule"/>
</dbReference>
<dbReference type="GO" id="GO:0008360">
    <property type="term" value="P:regulation of cell shape"/>
    <property type="evidence" value="ECO:0007669"/>
    <property type="project" value="UniProtKB-KW"/>
</dbReference>
<dbReference type="Gene3D" id="3.40.50.20">
    <property type="match status" value="1"/>
</dbReference>
<dbReference type="Gene3D" id="3.30.1490.20">
    <property type="entry name" value="ATP-grasp fold, A domain"/>
    <property type="match status" value="1"/>
</dbReference>
<dbReference type="Gene3D" id="3.30.470.20">
    <property type="entry name" value="ATP-grasp fold, B domain"/>
    <property type="match status" value="1"/>
</dbReference>
<dbReference type="HAMAP" id="MF_00047">
    <property type="entry name" value="Dala_Dala_lig"/>
    <property type="match status" value="1"/>
</dbReference>
<dbReference type="InterPro" id="IPR011761">
    <property type="entry name" value="ATP-grasp"/>
</dbReference>
<dbReference type="InterPro" id="IPR013815">
    <property type="entry name" value="ATP_grasp_subdomain_1"/>
</dbReference>
<dbReference type="InterPro" id="IPR000291">
    <property type="entry name" value="D-Ala_lig_Van_CS"/>
</dbReference>
<dbReference type="InterPro" id="IPR005905">
    <property type="entry name" value="D_ala_D_ala"/>
</dbReference>
<dbReference type="InterPro" id="IPR011095">
    <property type="entry name" value="Dala_Dala_lig_C"/>
</dbReference>
<dbReference type="InterPro" id="IPR011127">
    <property type="entry name" value="Dala_Dala_lig_N"/>
</dbReference>
<dbReference type="InterPro" id="IPR016185">
    <property type="entry name" value="PreATP-grasp_dom_sf"/>
</dbReference>
<dbReference type="NCBIfam" id="TIGR01205">
    <property type="entry name" value="D_ala_D_alaTIGR"/>
    <property type="match status" value="1"/>
</dbReference>
<dbReference type="NCBIfam" id="NF002527">
    <property type="entry name" value="PRK01966.1-3"/>
    <property type="match status" value="1"/>
</dbReference>
<dbReference type="PANTHER" id="PTHR23132">
    <property type="entry name" value="D-ALANINE--D-ALANINE LIGASE"/>
    <property type="match status" value="1"/>
</dbReference>
<dbReference type="PANTHER" id="PTHR23132:SF23">
    <property type="entry name" value="D-ALANINE--D-ALANINE LIGASE B"/>
    <property type="match status" value="1"/>
</dbReference>
<dbReference type="Pfam" id="PF07478">
    <property type="entry name" value="Dala_Dala_lig_C"/>
    <property type="match status" value="1"/>
</dbReference>
<dbReference type="Pfam" id="PF01820">
    <property type="entry name" value="Dala_Dala_lig_N"/>
    <property type="match status" value="1"/>
</dbReference>
<dbReference type="SUPFAM" id="SSF56059">
    <property type="entry name" value="Glutathione synthetase ATP-binding domain-like"/>
    <property type="match status" value="1"/>
</dbReference>
<dbReference type="SUPFAM" id="SSF52440">
    <property type="entry name" value="PreATP-grasp domain"/>
    <property type="match status" value="1"/>
</dbReference>
<dbReference type="PROSITE" id="PS50975">
    <property type="entry name" value="ATP_GRASP"/>
    <property type="match status" value="1"/>
</dbReference>
<dbReference type="PROSITE" id="PS00843">
    <property type="entry name" value="DALA_DALA_LIGASE_1"/>
    <property type="match status" value="1"/>
</dbReference>
<dbReference type="PROSITE" id="PS00844">
    <property type="entry name" value="DALA_DALA_LIGASE_2"/>
    <property type="match status" value="1"/>
</dbReference>
<feature type="chain" id="PRO_1000117451" description="D-alanine--D-alanine ligase">
    <location>
        <begin position="1"/>
        <end position="346"/>
    </location>
</feature>
<feature type="domain" description="ATP-grasp" evidence="2">
    <location>
        <begin position="133"/>
        <end position="324"/>
    </location>
</feature>
<feature type="binding site" evidence="2">
    <location>
        <begin position="159"/>
        <end position="211"/>
    </location>
    <ligand>
        <name>ATP</name>
        <dbReference type="ChEBI" id="CHEBI:30616"/>
    </ligand>
</feature>
<feature type="binding site" evidence="2">
    <location>
        <position position="284"/>
    </location>
    <ligand>
        <name>Mg(2+)</name>
        <dbReference type="ChEBI" id="CHEBI:18420"/>
        <label>1</label>
    </ligand>
</feature>
<feature type="binding site" evidence="2">
    <location>
        <position position="296"/>
    </location>
    <ligand>
        <name>Mg(2+)</name>
        <dbReference type="ChEBI" id="CHEBI:18420"/>
        <label>1</label>
    </ligand>
</feature>
<feature type="binding site" evidence="2">
    <location>
        <position position="296"/>
    </location>
    <ligand>
        <name>Mg(2+)</name>
        <dbReference type="ChEBI" id="CHEBI:18420"/>
        <label>2</label>
    </ligand>
</feature>
<feature type="binding site" evidence="2">
    <location>
        <position position="298"/>
    </location>
    <ligand>
        <name>Mg(2+)</name>
        <dbReference type="ChEBI" id="CHEBI:18420"/>
        <label>2</label>
    </ligand>
</feature>
<evidence type="ECO:0000250" key="1"/>
<evidence type="ECO:0000255" key="2">
    <source>
        <dbReference type="HAMAP-Rule" id="MF_00047"/>
    </source>
</evidence>
<proteinExistence type="inferred from homology"/>
<name>DDL_CAMLR</name>
<organism>
    <name type="scientific">Campylobacter lari (strain RM2100 / D67 / ATCC BAA-1060)</name>
    <dbReference type="NCBI Taxonomy" id="306263"/>
    <lineage>
        <taxon>Bacteria</taxon>
        <taxon>Pseudomonadati</taxon>
        <taxon>Campylobacterota</taxon>
        <taxon>Epsilonproteobacteria</taxon>
        <taxon>Campylobacterales</taxon>
        <taxon>Campylobacteraceae</taxon>
        <taxon>Campylobacter</taxon>
    </lineage>
</organism>